<sequence length="398" mass="44171">MTIDLSLKSNQQKTIAVLGASYAGHRAIQVLVASLPEDWRVVVLERNTHANHLYAFPRMSVVRGHEQKVFIPYTNMFKPALDRRDQHVLLHANVLELDQEQRRVSYELIDDKQSGVQWLHWDFLVYALGSHLPDPINVWSNSEHVNTHDGSKMMGVKWLRDAQDRIEKAESIVIVGGGALGVQLATDIAVTYGSSKKVTLTHSRPQLLPRFDPWMHEKTAARLQELGVELALGSRVDLSTVSEDKKRFKLLDGRELQGDLTLFCLGQTPNTSLLGASSLNDSGMAKVEPTLQLSANERIFVIGDAADAFGAINAGHTAWDQAEVAAKNILALIDNKGQAMKLEEYKPTPPAIKVSLGIDRAIRQTMAGELVEVDSGSIDLNSTNMWTRRGLSTDDLWQ</sequence>
<feature type="chain" id="PRO_0000441964" description="Fe-regulated protein 8">
    <location>
        <begin position="1"/>
        <end position="398"/>
    </location>
</feature>
<accession>A1A653</accession>
<dbReference type="EMBL" id="CM003141">
    <property type="protein sequence ID" value="KIS71536.1"/>
    <property type="molecule type" value="Genomic_DNA"/>
</dbReference>
<dbReference type="EMBL" id="BK004083">
    <property type="protein sequence ID" value="DAA04934.1"/>
    <property type="molecule type" value="Genomic_DNA"/>
</dbReference>
<dbReference type="RefSeq" id="XP_011387440.1">
    <property type="nucleotide sequence ID" value="XM_011389138.1"/>
</dbReference>
<dbReference type="SMR" id="A1A653"/>
<dbReference type="STRING" id="237631.A1A653"/>
<dbReference type="EnsemblFungi" id="KIS71536">
    <property type="protein sequence ID" value="KIS71536"/>
    <property type="gene ID" value="UMAG_11338"/>
</dbReference>
<dbReference type="GeneID" id="23567234"/>
<dbReference type="KEGG" id="uma:UMAG_11338"/>
<dbReference type="VEuPathDB" id="FungiDB:UMAG_11338"/>
<dbReference type="InParanoid" id="A1A653"/>
<dbReference type="OrthoDB" id="202203at2759"/>
<dbReference type="Proteomes" id="UP000000561">
    <property type="component" value="Chromosome 2"/>
</dbReference>
<dbReference type="GO" id="GO:0005737">
    <property type="term" value="C:cytoplasm"/>
    <property type="evidence" value="ECO:0000318"/>
    <property type="project" value="GO_Central"/>
</dbReference>
<dbReference type="GO" id="GO:0004174">
    <property type="term" value="F:electron-transferring-flavoprotein dehydrogenase activity"/>
    <property type="evidence" value="ECO:0000318"/>
    <property type="project" value="GO_Central"/>
</dbReference>
<dbReference type="GO" id="GO:0050660">
    <property type="term" value="F:flavin adenine dinucleotide binding"/>
    <property type="evidence" value="ECO:0000318"/>
    <property type="project" value="GO_Central"/>
</dbReference>
<dbReference type="Gene3D" id="3.50.50.100">
    <property type="match status" value="1"/>
</dbReference>
<dbReference type="InterPro" id="IPR036188">
    <property type="entry name" value="FAD/NAD-bd_sf"/>
</dbReference>
<dbReference type="InterPro" id="IPR023753">
    <property type="entry name" value="FAD/NAD-binding_dom"/>
</dbReference>
<dbReference type="PANTHER" id="PTHR43735">
    <property type="entry name" value="APOPTOSIS-INDUCING FACTOR 1"/>
    <property type="match status" value="1"/>
</dbReference>
<dbReference type="PANTHER" id="PTHR43735:SF2">
    <property type="entry name" value="FE-REGULATED PROTEIN 8"/>
    <property type="match status" value="1"/>
</dbReference>
<dbReference type="Pfam" id="PF07992">
    <property type="entry name" value="Pyr_redox_2"/>
    <property type="match status" value="1"/>
</dbReference>
<dbReference type="PRINTS" id="PR00368">
    <property type="entry name" value="FADPNR"/>
</dbReference>
<dbReference type="PRINTS" id="PR00411">
    <property type="entry name" value="PNDRDTASEI"/>
</dbReference>
<dbReference type="SUPFAM" id="SSF51905">
    <property type="entry name" value="FAD/NAD(P)-binding domain"/>
    <property type="match status" value="1"/>
</dbReference>
<protein>
    <recommendedName>
        <fullName evidence="3">Fe-regulated protein 8</fullName>
    </recommendedName>
</protein>
<gene>
    <name evidence="3" type="primary">fer8</name>
    <name type="ORF">UMAG_11338</name>
</gene>
<name>FER8_MYCMD</name>
<evidence type="ECO:0000269" key="1">
    <source>
    </source>
</evidence>
<evidence type="ECO:0000269" key="2">
    <source ref="4"/>
</evidence>
<evidence type="ECO:0000303" key="3">
    <source>
    </source>
</evidence>
<keyword id="KW-1185">Reference proteome</keyword>
<keyword id="KW-0843">Virulence</keyword>
<reference key="1">
    <citation type="journal article" date="2006" name="Nature">
        <title>Insights from the genome of the biotrophic fungal plant pathogen Ustilago maydis.</title>
        <authorList>
            <person name="Kaemper J."/>
            <person name="Kahmann R."/>
            <person name="Boelker M."/>
            <person name="Ma L.-J."/>
            <person name="Brefort T."/>
            <person name="Saville B.J."/>
            <person name="Banuett F."/>
            <person name="Kronstad J.W."/>
            <person name="Gold S.E."/>
            <person name="Mueller O."/>
            <person name="Perlin M.H."/>
            <person name="Woesten H.A.B."/>
            <person name="de Vries R."/>
            <person name="Ruiz-Herrera J."/>
            <person name="Reynaga-Pena C.G."/>
            <person name="Snetselaar K."/>
            <person name="McCann M."/>
            <person name="Perez-Martin J."/>
            <person name="Feldbruegge M."/>
            <person name="Basse C.W."/>
            <person name="Steinberg G."/>
            <person name="Ibeas J.I."/>
            <person name="Holloman W."/>
            <person name="Guzman P."/>
            <person name="Farman M.L."/>
            <person name="Stajich J.E."/>
            <person name="Sentandreu R."/>
            <person name="Gonzalez-Prieto J.M."/>
            <person name="Kennell J.C."/>
            <person name="Molina L."/>
            <person name="Schirawski J."/>
            <person name="Mendoza-Mendoza A."/>
            <person name="Greilinger D."/>
            <person name="Muench K."/>
            <person name="Roessel N."/>
            <person name="Scherer M."/>
            <person name="Vranes M."/>
            <person name="Ladendorf O."/>
            <person name="Vincon V."/>
            <person name="Fuchs U."/>
            <person name="Sandrock B."/>
            <person name="Meng S."/>
            <person name="Ho E.C.H."/>
            <person name="Cahill M.J."/>
            <person name="Boyce K.J."/>
            <person name="Klose J."/>
            <person name="Klosterman S.J."/>
            <person name="Deelstra H.J."/>
            <person name="Ortiz-Castellanos L."/>
            <person name="Li W."/>
            <person name="Sanchez-Alonso P."/>
            <person name="Schreier P.H."/>
            <person name="Haeuser-Hahn I."/>
            <person name="Vaupel M."/>
            <person name="Koopmann E."/>
            <person name="Friedrich G."/>
            <person name="Voss H."/>
            <person name="Schlueter T."/>
            <person name="Margolis J."/>
            <person name="Platt D."/>
            <person name="Swimmer C."/>
            <person name="Gnirke A."/>
            <person name="Chen F."/>
            <person name="Vysotskaia V."/>
            <person name="Mannhaupt G."/>
            <person name="Gueldener U."/>
            <person name="Muensterkoetter M."/>
            <person name="Haase D."/>
            <person name="Oesterheld M."/>
            <person name="Mewes H.-W."/>
            <person name="Mauceli E.W."/>
            <person name="DeCaprio D."/>
            <person name="Wade C.M."/>
            <person name="Butler J."/>
            <person name="Young S.K."/>
            <person name="Jaffe D.B."/>
            <person name="Calvo S.E."/>
            <person name="Nusbaum C."/>
            <person name="Galagan J.E."/>
            <person name="Birren B.W."/>
        </authorList>
    </citation>
    <scope>NUCLEOTIDE SEQUENCE [LARGE SCALE GENOMIC DNA]</scope>
    <source>
        <strain>DSM 14603 / FGSC 9021 / UM521</strain>
    </source>
</reference>
<reference key="2">
    <citation type="submission" date="2014-09" db="EMBL/GenBank/DDBJ databases">
        <authorList>
            <person name="Gueldener U."/>
            <person name="Muensterkoetter M."/>
            <person name="Walter M.C."/>
            <person name="Mannhaupt G."/>
            <person name="Kahmann R."/>
        </authorList>
    </citation>
    <scope>GENOME REANNOTATION</scope>
    <source>
        <strain>DSM 14603 / FGSC 9021 / UM521</strain>
    </source>
</reference>
<reference key="3">
    <citation type="journal article" date="2006" name="Plant Cell">
        <title>A ferroxidation/permeation iron uptake system is required for virulence in Ustilago maydis.</title>
        <authorList>
            <person name="Eichhorn H."/>
            <person name="Lessing F."/>
            <person name="Winterberg B."/>
            <person name="Schirawski J."/>
            <person name="Kamper J."/>
            <person name="Muller P."/>
            <person name="Kahmann R."/>
        </authorList>
    </citation>
    <scope>INDUCTION</scope>
    <scope>FUNCTION</scope>
    <source>
        <strain>DSM 14603 / FGSC 9021 / UM521</strain>
    </source>
</reference>
<reference key="4">
    <citation type="journal article" date="2010" name="Mol. Microbiol.">
        <title>Elucidation of the complete ferrichrome A biosynthetic pathway in Ustilago maydis.</title>
        <authorList>
            <person name="Winterberg B."/>
            <person name="Uhlmann S."/>
            <person name="Linne U."/>
            <person name="Lessing F."/>
            <person name="Marahiel M.A."/>
            <person name="Eichhorn H."/>
            <person name="Kahmann R."/>
            <person name="Schirawski J."/>
        </authorList>
    </citation>
    <scope>FUNCTION</scope>
    <source>
        <strain>DSM 14603 / FGSC 9021 / UM521</strain>
    </source>
</reference>
<organism>
    <name type="scientific">Mycosarcoma maydis</name>
    <name type="common">Corn smut fungus</name>
    <name type="synonym">Ustilago maydis</name>
    <dbReference type="NCBI Taxonomy" id="5270"/>
    <lineage>
        <taxon>Eukaryota</taxon>
        <taxon>Fungi</taxon>
        <taxon>Dikarya</taxon>
        <taxon>Basidiomycota</taxon>
        <taxon>Ustilaginomycotina</taxon>
        <taxon>Ustilaginomycetes</taxon>
        <taxon>Ustilaginales</taxon>
        <taxon>Ustilaginaceae</taxon>
        <taxon>Mycosarcoma</taxon>
    </lineage>
</organism>
<comment type="function">
    <text evidence="1 2">Protein of unknown function; part of the gene cluster that mediates the biosynthesis of siderophore ferrichrome A which is contributing to organismal virulence (PubMed:17138696, Ref.4).</text>
</comment>
<comment type="induction">
    <text evidence="1">Expression regulated by iron through the urbs1 transcription factor (PubMed:17138696).</text>
</comment>
<proteinExistence type="evidence at transcript level"/>